<proteinExistence type="evidence at transcript level"/>
<organism>
    <name type="scientific">Arabidopsis thaliana</name>
    <name type="common">Mouse-ear cress</name>
    <dbReference type="NCBI Taxonomy" id="3702"/>
    <lineage>
        <taxon>Eukaryota</taxon>
        <taxon>Viridiplantae</taxon>
        <taxon>Streptophyta</taxon>
        <taxon>Embryophyta</taxon>
        <taxon>Tracheophyta</taxon>
        <taxon>Spermatophyta</taxon>
        <taxon>Magnoliopsida</taxon>
        <taxon>eudicotyledons</taxon>
        <taxon>Gunneridae</taxon>
        <taxon>Pentapetalae</taxon>
        <taxon>rosids</taxon>
        <taxon>malvids</taxon>
        <taxon>Brassicales</taxon>
        <taxon>Brassicaceae</taxon>
        <taxon>Camelineae</taxon>
        <taxon>Arabidopsis</taxon>
    </lineage>
</organism>
<reference key="1">
    <citation type="journal article" date="1999" name="Nature">
        <title>Sequence and analysis of chromosome 4 of the plant Arabidopsis thaliana.</title>
        <authorList>
            <person name="Mayer K.F.X."/>
            <person name="Schueller C."/>
            <person name="Wambutt R."/>
            <person name="Murphy G."/>
            <person name="Volckaert G."/>
            <person name="Pohl T."/>
            <person name="Duesterhoeft A."/>
            <person name="Stiekema W."/>
            <person name="Entian K.-D."/>
            <person name="Terryn N."/>
            <person name="Harris B."/>
            <person name="Ansorge W."/>
            <person name="Brandt P."/>
            <person name="Grivell L.A."/>
            <person name="Rieger M."/>
            <person name="Weichselgartner M."/>
            <person name="de Simone V."/>
            <person name="Obermaier B."/>
            <person name="Mache R."/>
            <person name="Mueller M."/>
            <person name="Kreis M."/>
            <person name="Delseny M."/>
            <person name="Puigdomenech P."/>
            <person name="Watson M."/>
            <person name="Schmidtheini T."/>
            <person name="Reichert B."/>
            <person name="Portetelle D."/>
            <person name="Perez-Alonso M."/>
            <person name="Boutry M."/>
            <person name="Bancroft I."/>
            <person name="Vos P."/>
            <person name="Hoheisel J."/>
            <person name="Zimmermann W."/>
            <person name="Wedler H."/>
            <person name="Ridley P."/>
            <person name="Langham S.-A."/>
            <person name="McCullagh B."/>
            <person name="Bilham L."/>
            <person name="Robben J."/>
            <person name="van der Schueren J."/>
            <person name="Grymonprez B."/>
            <person name="Chuang Y.-J."/>
            <person name="Vandenbussche F."/>
            <person name="Braeken M."/>
            <person name="Weltjens I."/>
            <person name="Voet M."/>
            <person name="Bastiaens I."/>
            <person name="Aert R."/>
            <person name="Defoor E."/>
            <person name="Weitzenegger T."/>
            <person name="Bothe G."/>
            <person name="Ramsperger U."/>
            <person name="Hilbert H."/>
            <person name="Braun M."/>
            <person name="Holzer E."/>
            <person name="Brandt A."/>
            <person name="Peters S."/>
            <person name="van Staveren M."/>
            <person name="Dirkse W."/>
            <person name="Mooijman P."/>
            <person name="Klein Lankhorst R."/>
            <person name="Rose M."/>
            <person name="Hauf J."/>
            <person name="Koetter P."/>
            <person name="Berneiser S."/>
            <person name="Hempel S."/>
            <person name="Feldpausch M."/>
            <person name="Lamberth S."/>
            <person name="Van den Daele H."/>
            <person name="De Keyser A."/>
            <person name="Buysshaert C."/>
            <person name="Gielen J."/>
            <person name="Villarroel R."/>
            <person name="De Clercq R."/>
            <person name="van Montagu M."/>
            <person name="Rogers J."/>
            <person name="Cronin A."/>
            <person name="Quail M.A."/>
            <person name="Bray-Allen S."/>
            <person name="Clark L."/>
            <person name="Doggett J."/>
            <person name="Hall S."/>
            <person name="Kay M."/>
            <person name="Lennard N."/>
            <person name="McLay K."/>
            <person name="Mayes R."/>
            <person name="Pettett A."/>
            <person name="Rajandream M.A."/>
            <person name="Lyne M."/>
            <person name="Benes V."/>
            <person name="Rechmann S."/>
            <person name="Borkova D."/>
            <person name="Bloecker H."/>
            <person name="Scharfe M."/>
            <person name="Grimm M."/>
            <person name="Loehnert T.-H."/>
            <person name="Dose S."/>
            <person name="de Haan M."/>
            <person name="Maarse A.C."/>
            <person name="Schaefer M."/>
            <person name="Mueller-Auer S."/>
            <person name="Gabel C."/>
            <person name="Fuchs M."/>
            <person name="Fartmann B."/>
            <person name="Granderath K."/>
            <person name="Dauner D."/>
            <person name="Herzl A."/>
            <person name="Neumann S."/>
            <person name="Argiriou A."/>
            <person name="Vitale D."/>
            <person name="Liguori R."/>
            <person name="Piravandi E."/>
            <person name="Massenet O."/>
            <person name="Quigley F."/>
            <person name="Clabauld G."/>
            <person name="Muendlein A."/>
            <person name="Felber R."/>
            <person name="Schnabl S."/>
            <person name="Hiller R."/>
            <person name="Schmidt W."/>
            <person name="Lecharny A."/>
            <person name="Aubourg S."/>
            <person name="Chefdor F."/>
            <person name="Cooke R."/>
            <person name="Berger C."/>
            <person name="Monfort A."/>
            <person name="Casacuberta E."/>
            <person name="Gibbons T."/>
            <person name="Weber N."/>
            <person name="Vandenbol M."/>
            <person name="Bargues M."/>
            <person name="Terol J."/>
            <person name="Torres A."/>
            <person name="Perez-Perez A."/>
            <person name="Purnelle B."/>
            <person name="Bent E."/>
            <person name="Johnson S."/>
            <person name="Tacon D."/>
            <person name="Jesse T."/>
            <person name="Heijnen L."/>
            <person name="Schwarz S."/>
            <person name="Scholler P."/>
            <person name="Heber S."/>
            <person name="Francs P."/>
            <person name="Bielke C."/>
            <person name="Frishman D."/>
            <person name="Haase D."/>
            <person name="Lemcke K."/>
            <person name="Mewes H.-W."/>
            <person name="Stocker S."/>
            <person name="Zaccaria P."/>
            <person name="Bevan M."/>
            <person name="Wilson R.K."/>
            <person name="de la Bastide M."/>
            <person name="Habermann K."/>
            <person name="Parnell L."/>
            <person name="Dedhia N."/>
            <person name="Gnoj L."/>
            <person name="Schutz K."/>
            <person name="Huang E."/>
            <person name="Spiegel L."/>
            <person name="Sekhon M."/>
            <person name="Murray J."/>
            <person name="Sheet P."/>
            <person name="Cordes M."/>
            <person name="Abu-Threideh J."/>
            <person name="Stoneking T."/>
            <person name="Kalicki J."/>
            <person name="Graves T."/>
            <person name="Harmon G."/>
            <person name="Edwards J."/>
            <person name="Latreille P."/>
            <person name="Courtney L."/>
            <person name="Cloud J."/>
            <person name="Abbott A."/>
            <person name="Scott K."/>
            <person name="Johnson D."/>
            <person name="Minx P."/>
            <person name="Bentley D."/>
            <person name="Fulton B."/>
            <person name="Miller N."/>
            <person name="Greco T."/>
            <person name="Kemp K."/>
            <person name="Kramer J."/>
            <person name="Fulton L."/>
            <person name="Mardis E."/>
            <person name="Dante M."/>
            <person name="Pepin K."/>
            <person name="Hillier L.W."/>
            <person name="Nelson J."/>
            <person name="Spieth J."/>
            <person name="Ryan E."/>
            <person name="Andrews S."/>
            <person name="Geisel C."/>
            <person name="Layman D."/>
            <person name="Du H."/>
            <person name="Ali J."/>
            <person name="Berghoff A."/>
            <person name="Jones K."/>
            <person name="Drone K."/>
            <person name="Cotton M."/>
            <person name="Joshu C."/>
            <person name="Antonoiu B."/>
            <person name="Zidanic M."/>
            <person name="Strong C."/>
            <person name="Sun H."/>
            <person name="Lamar B."/>
            <person name="Yordan C."/>
            <person name="Ma P."/>
            <person name="Zhong J."/>
            <person name="Preston R."/>
            <person name="Vil D."/>
            <person name="Shekher M."/>
            <person name="Matero A."/>
            <person name="Shah R."/>
            <person name="Swaby I.K."/>
            <person name="O'Shaughnessy A."/>
            <person name="Rodriguez M."/>
            <person name="Hoffman J."/>
            <person name="Till S."/>
            <person name="Granat S."/>
            <person name="Shohdy N."/>
            <person name="Hasegawa A."/>
            <person name="Hameed A."/>
            <person name="Lodhi M."/>
            <person name="Johnson A."/>
            <person name="Chen E."/>
            <person name="Marra M.A."/>
            <person name="Martienssen R."/>
            <person name="McCombie W.R."/>
        </authorList>
    </citation>
    <scope>NUCLEOTIDE SEQUENCE [LARGE SCALE GENOMIC DNA]</scope>
    <source>
        <strain>cv. Columbia</strain>
    </source>
</reference>
<reference key="2">
    <citation type="journal article" date="2017" name="Plant J.">
        <title>Araport11: a complete reannotation of the Arabidopsis thaliana reference genome.</title>
        <authorList>
            <person name="Cheng C.Y."/>
            <person name="Krishnakumar V."/>
            <person name="Chan A.P."/>
            <person name="Thibaud-Nissen F."/>
            <person name="Schobel S."/>
            <person name="Town C.D."/>
        </authorList>
    </citation>
    <scope>GENOME REANNOTATION</scope>
    <source>
        <strain>cv. Columbia</strain>
    </source>
</reference>
<reference key="3">
    <citation type="submission" date="2005-03" db="EMBL/GenBank/DDBJ databases">
        <authorList>
            <person name="Underwood B.A."/>
            <person name="Xiao Y.-L."/>
            <person name="Moskal W.A. Jr."/>
            <person name="Monaghan E.L."/>
            <person name="Wang W."/>
            <person name="Redman J.C."/>
            <person name="Wu H.C."/>
            <person name="Utterback T."/>
            <person name="Town C.D."/>
        </authorList>
    </citation>
    <scope>NUCLEOTIDE SEQUENCE [LARGE SCALE MRNA]</scope>
    <source>
        <strain>cv. Columbia</strain>
    </source>
</reference>
<reference key="4">
    <citation type="journal article" date="2005" name="Plant Physiol.">
        <title>Analysis of the cDNAs of hypothetical genes on Arabidopsis chromosome 2 reveals numerous transcript variants.</title>
        <authorList>
            <person name="Xiao Y.-L."/>
            <person name="Smith S.R."/>
            <person name="Ishmael N."/>
            <person name="Redman J.C."/>
            <person name="Kumar N."/>
            <person name="Monaghan E.L."/>
            <person name="Ayele M."/>
            <person name="Haas B.J."/>
            <person name="Wu H.C."/>
            <person name="Town C.D."/>
        </authorList>
    </citation>
    <scope>NUCLEOTIDE SEQUENCE [LARGE SCALE MRNA]</scope>
    <source>
        <strain>cv. Columbia</strain>
    </source>
</reference>
<reference key="5">
    <citation type="journal article" date="2016" name="PLoS ONE">
        <title>The Arabidopsis domain of unknown function 1218 (DUF1218) containing proteins, MODIFYING WALL LIGNIN-1 and 2 (At1g31720/MWL-1 and At4g19370/MWL-2) function redundantly to alter secondary cell wall lignin content.</title>
        <authorList>
            <person name="Mewalal R."/>
            <person name="Mizrachi E."/>
            <person name="Coetzee B."/>
            <person name="Mansfield S.D."/>
            <person name="Myburg A.A."/>
        </authorList>
    </citation>
    <scope>FUNCTION</scope>
    <scope>DISRUPTION PHENOTYPE</scope>
    <scope>SUBCELLULAR LOCATION</scope>
    <source>
        <strain>cv. Columbia</strain>
    </source>
</reference>
<sequence>MHNLFLYSVVFSLGLVSFITCFAAEFKRTQKEDIRWDTERNCYVPGSHAFGLGSAAVLCFCLAQIVGNIVVFRNHRTRTKREDGYKITDLTLPTVLLLLSWSNFVVVVLILSTAISMSRAQAYGEGWLDEDCYLVKDGVFAASGCLAILGLGALTISATRIKVKKQQQLVQVVIKDQNQDQRRSMEEEQKHDEHQTNKSESVIHLVEEVSSTNISRI</sequence>
<comment type="function">
    <text evidence="3">Together with MWL1, contributes to secondary cell wall biology, specifically lignin biosynthesis.</text>
</comment>
<comment type="subcellular location">
    <subcellularLocation>
        <location evidence="3">Cell membrane</location>
        <topology evidence="1">Multi-pass membrane protein</topology>
    </subcellularLocation>
</comment>
<comment type="disruption phenotype">
    <text evidence="3">No visible phenotype. Double mutants lacking both MWL1 and MWL2 exhibit smaller rosettes with a decrease in rosette fresh weight and stem height associated with a reduction in total lignin content and an increase in syringyl/guaiacyl (S/G) monomer ratio.</text>
</comment>
<comment type="similarity">
    <text evidence="5">Belongs to the DESIGUAL family.</text>
</comment>
<evidence type="ECO:0000255" key="1"/>
<evidence type="ECO:0000255" key="2">
    <source>
        <dbReference type="PROSITE-ProRule" id="PRU00498"/>
    </source>
</evidence>
<evidence type="ECO:0000269" key="3">
    <source>
    </source>
</evidence>
<evidence type="ECO:0000303" key="4">
    <source>
    </source>
</evidence>
<evidence type="ECO:0000305" key="5"/>
<evidence type="ECO:0000312" key="6">
    <source>
        <dbReference type="Araport" id="AT4G19370"/>
    </source>
</evidence>
<evidence type="ECO:0000312" key="7">
    <source>
        <dbReference type="EMBL" id="AEE84173.1"/>
    </source>
</evidence>
<feature type="signal peptide" evidence="1">
    <location>
        <begin position="1"/>
        <end position="23"/>
    </location>
</feature>
<feature type="chain" id="PRO_0000446980" description="Protein MODIFYING WALL LIGNIN-2">
    <location>
        <begin position="24"/>
        <end position="217"/>
    </location>
</feature>
<feature type="topological domain" description="Cytoplasmic" evidence="5">
    <location>
        <begin position="24"/>
        <end position="51"/>
    </location>
</feature>
<feature type="transmembrane region" description="Helical" evidence="1">
    <location>
        <begin position="52"/>
        <end position="72"/>
    </location>
</feature>
<feature type="topological domain" description="Extracellular" evidence="5">
    <location>
        <begin position="73"/>
        <end position="94"/>
    </location>
</feature>
<feature type="transmembrane region" description="Helical" evidence="1">
    <location>
        <begin position="95"/>
        <end position="115"/>
    </location>
</feature>
<feature type="topological domain" description="Cytoplasmic" evidence="5">
    <location>
        <begin position="116"/>
        <end position="137"/>
    </location>
</feature>
<feature type="transmembrane region" description="Helical" evidence="1">
    <location>
        <begin position="138"/>
        <end position="158"/>
    </location>
</feature>
<feature type="topological domain" description="Extracellular" evidence="5">
    <location>
        <begin position="159"/>
        <end position="217"/>
    </location>
</feature>
<feature type="glycosylation site" description="N-linked (GlcNAc...) asparagine" evidence="2">
    <location>
        <position position="197"/>
    </location>
</feature>
<feature type="glycosylation site" description="N-linked (GlcNAc...) asparagine" evidence="2">
    <location>
        <position position="213"/>
    </location>
</feature>
<keyword id="KW-1003">Cell membrane</keyword>
<keyword id="KW-0325">Glycoprotein</keyword>
<keyword id="KW-0438">Lignin biosynthesis</keyword>
<keyword id="KW-0472">Membrane</keyword>
<keyword id="KW-1185">Reference proteome</keyword>
<keyword id="KW-0732">Signal</keyword>
<keyword id="KW-0812">Transmembrane</keyword>
<keyword id="KW-1133">Transmembrane helix</keyword>
<gene>
    <name evidence="4" type="primary">MWL2</name>
    <name evidence="6" type="ordered locus">At4g19370</name>
    <name evidence="7" type="ORF">T5K18.150</name>
</gene>
<dbReference type="EMBL" id="AL022580">
    <property type="protein sequence ID" value="CAA18624.1"/>
    <property type="molecule type" value="Genomic_DNA"/>
</dbReference>
<dbReference type="EMBL" id="AL161550">
    <property type="protein sequence ID" value="CAB78939.1"/>
    <property type="molecule type" value="Genomic_DNA"/>
</dbReference>
<dbReference type="EMBL" id="CP002687">
    <property type="protein sequence ID" value="AEE84173.1"/>
    <property type="molecule type" value="Genomic_DNA"/>
</dbReference>
<dbReference type="EMBL" id="AY954860">
    <property type="protein sequence ID" value="AAX55186.1"/>
    <property type="molecule type" value="mRNA"/>
</dbReference>
<dbReference type="EMBL" id="DQ132708">
    <property type="protein sequence ID" value="AAZ52738.1"/>
    <property type="molecule type" value="mRNA"/>
</dbReference>
<dbReference type="PIR" id="T05820">
    <property type="entry name" value="T05820"/>
</dbReference>
<dbReference type="RefSeq" id="NP_193672.1">
    <property type="nucleotide sequence ID" value="NM_118057.3"/>
</dbReference>
<dbReference type="SMR" id="O65708"/>
<dbReference type="STRING" id="3702.O65708"/>
<dbReference type="GlyCosmos" id="O65708">
    <property type="glycosylation" value="2 sites, No reported glycans"/>
</dbReference>
<dbReference type="GlyGen" id="O65708">
    <property type="glycosylation" value="2 sites"/>
</dbReference>
<dbReference type="PaxDb" id="3702-AT4G19370.1"/>
<dbReference type="EnsemblPlants" id="AT4G19370.1">
    <property type="protein sequence ID" value="AT4G19370.1"/>
    <property type="gene ID" value="AT4G19370"/>
</dbReference>
<dbReference type="GeneID" id="827678"/>
<dbReference type="Gramene" id="AT4G19370.1">
    <property type="protein sequence ID" value="AT4G19370.1"/>
    <property type="gene ID" value="AT4G19370"/>
</dbReference>
<dbReference type="KEGG" id="ath:AT4G19370"/>
<dbReference type="Araport" id="AT4G19370"/>
<dbReference type="TAIR" id="AT4G19370">
    <property type="gene designation" value="MWL-2"/>
</dbReference>
<dbReference type="eggNOG" id="ENOG502S1EJ">
    <property type="taxonomic scope" value="Eukaryota"/>
</dbReference>
<dbReference type="HOGENOM" id="CLU_110866_0_0_1"/>
<dbReference type="InParanoid" id="O65708"/>
<dbReference type="OMA" id="VSFITCF"/>
<dbReference type="PhylomeDB" id="O65708"/>
<dbReference type="PRO" id="PR:O65708"/>
<dbReference type="Proteomes" id="UP000006548">
    <property type="component" value="Chromosome 4"/>
</dbReference>
<dbReference type="ExpressionAtlas" id="O65708">
    <property type="expression patterns" value="baseline and differential"/>
</dbReference>
<dbReference type="GO" id="GO:0016020">
    <property type="term" value="C:membrane"/>
    <property type="evidence" value="ECO:0000314"/>
    <property type="project" value="TAIR"/>
</dbReference>
<dbReference type="GO" id="GO:0005886">
    <property type="term" value="C:plasma membrane"/>
    <property type="evidence" value="ECO:0000314"/>
    <property type="project" value="UniProtKB"/>
</dbReference>
<dbReference type="GO" id="GO:0009809">
    <property type="term" value="P:lignin biosynthetic process"/>
    <property type="evidence" value="ECO:0007669"/>
    <property type="project" value="UniProtKB-KW"/>
</dbReference>
<dbReference type="GO" id="GO:0009808">
    <property type="term" value="P:lignin metabolic process"/>
    <property type="evidence" value="ECO:0000316"/>
    <property type="project" value="TAIR"/>
</dbReference>
<dbReference type="InterPro" id="IPR009606">
    <property type="entry name" value="DEAL/Modifying_wall_lignin1/2"/>
</dbReference>
<dbReference type="InterPro" id="IPR052222">
    <property type="entry name" value="DESIGUAL"/>
</dbReference>
<dbReference type="PANTHER" id="PTHR31769">
    <property type="entry name" value="OS07G0462200 PROTEIN-RELATED"/>
    <property type="match status" value="1"/>
</dbReference>
<dbReference type="Pfam" id="PF06749">
    <property type="entry name" value="DUF1218"/>
    <property type="match status" value="1"/>
</dbReference>
<accession>O65708</accession>
<protein>
    <recommendedName>
        <fullName evidence="4">Protein MODIFYING WALL LIGNIN-2</fullName>
        <shortName evidence="4">MWL-2</shortName>
    </recommendedName>
</protein>
<name>MWL2_ARATH</name>